<name>DLDH_CHLTE</name>
<gene>
    <name type="primary">lpd</name>
    <name type="synonym">lpd-1</name>
    <name type="ordered locus">CT1298</name>
</gene>
<organism>
    <name type="scientific">Chlorobaculum tepidum (strain ATCC 49652 / DSM 12025 / NBRC 103806 / TLS)</name>
    <name type="common">Chlorobium tepidum</name>
    <dbReference type="NCBI Taxonomy" id="194439"/>
    <lineage>
        <taxon>Bacteria</taxon>
        <taxon>Pseudomonadati</taxon>
        <taxon>Chlorobiota</taxon>
        <taxon>Chlorobiia</taxon>
        <taxon>Chlorobiales</taxon>
        <taxon>Chlorobiaceae</taxon>
        <taxon>Chlorobaculum</taxon>
    </lineage>
</organism>
<accession>Q8KCW2</accession>
<reference key="1">
    <citation type="journal article" date="2002" name="Proc. Natl. Acad. Sci. U.S.A.">
        <title>The complete genome sequence of Chlorobium tepidum TLS, a photosynthetic, anaerobic, green-sulfur bacterium.</title>
        <authorList>
            <person name="Eisen J.A."/>
            <person name="Nelson K.E."/>
            <person name="Paulsen I.T."/>
            <person name="Heidelberg J.F."/>
            <person name="Wu M."/>
            <person name="Dodson R.J."/>
            <person name="DeBoy R.T."/>
            <person name="Gwinn M.L."/>
            <person name="Nelson W.C."/>
            <person name="Haft D.H."/>
            <person name="Hickey E.K."/>
            <person name="Peterson J.D."/>
            <person name="Durkin A.S."/>
            <person name="Kolonay J.F."/>
            <person name="Yang F."/>
            <person name="Holt I.E."/>
            <person name="Umayam L.A."/>
            <person name="Mason T.M."/>
            <person name="Brenner M."/>
            <person name="Shea T.P."/>
            <person name="Parksey D.S."/>
            <person name="Nierman W.C."/>
            <person name="Feldblyum T.V."/>
            <person name="Hansen C.L."/>
            <person name="Craven M.B."/>
            <person name="Radune D."/>
            <person name="Vamathevan J.J."/>
            <person name="Khouri H.M."/>
            <person name="White O."/>
            <person name="Gruber T.M."/>
            <person name="Ketchum K.A."/>
            <person name="Venter J.C."/>
            <person name="Tettelin H."/>
            <person name="Bryant D.A."/>
            <person name="Fraser C.M."/>
        </authorList>
    </citation>
    <scope>NUCLEOTIDE SEQUENCE [LARGE SCALE GENOMIC DNA]</scope>
    <source>
        <strain>ATCC 49652 / DSM 12025 / NBRC 103806 / TLS</strain>
    </source>
</reference>
<protein>
    <recommendedName>
        <fullName>Dihydrolipoyl dehydrogenase</fullName>
        <ecNumber>1.8.1.4</ecNumber>
    </recommendedName>
    <alternativeName>
        <fullName>Dihydrolipoamide dehydrogenase</fullName>
    </alternativeName>
    <alternativeName>
        <fullName>E3 component of pyruvate and 2-oxoglutarate dehydrogenases complexes</fullName>
    </alternativeName>
</protein>
<feature type="chain" id="PRO_0000068022" description="Dihydrolipoyl dehydrogenase">
    <location>
        <begin position="1"/>
        <end position="469"/>
    </location>
</feature>
<feature type="active site" description="Proton acceptor" evidence="1">
    <location>
        <position position="450"/>
    </location>
</feature>
<feature type="binding site" evidence="1">
    <location>
        <begin position="40"/>
        <end position="48"/>
    </location>
    <ligand>
        <name>FAD</name>
        <dbReference type="ChEBI" id="CHEBI:57692"/>
    </ligand>
</feature>
<feature type="binding site" evidence="1">
    <location>
        <position position="57"/>
    </location>
    <ligand>
        <name>FAD</name>
        <dbReference type="ChEBI" id="CHEBI:57692"/>
    </ligand>
</feature>
<feature type="binding site" evidence="1">
    <location>
        <position position="120"/>
    </location>
    <ligand>
        <name>FAD</name>
        <dbReference type="ChEBI" id="CHEBI:57692"/>
    </ligand>
</feature>
<feature type="binding site" evidence="1">
    <location>
        <begin position="186"/>
        <end position="190"/>
    </location>
    <ligand>
        <name>NAD(+)</name>
        <dbReference type="ChEBI" id="CHEBI:57540"/>
    </ligand>
</feature>
<feature type="binding site" evidence="1">
    <location>
        <position position="209"/>
    </location>
    <ligand>
        <name>NAD(+)</name>
        <dbReference type="ChEBI" id="CHEBI:57540"/>
    </ligand>
</feature>
<feature type="binding site" evidence="1">
    <location>
        <begin position="275"/>
        <end position="278"/>
    </location>
    <ligand>
        <name>NAD(+)</name>
        <dbReference type="ChEBI" id="CHEBI:57540"/>
    </ligand>
</feature>
<feature type="binding site" evidence="1">
    <location>
        <position position="317"/>
    </location>
    <ligand>
        <name>FAD</name>
        <dbReference type="ChEBI" id="CHEBI:57692"/>
    </ligand>
</feature>
<feature type="binding site" evidence="1">
    <location>
        <position position="325"/>
    </location>
    <ligand>
        <name>FAD</name>
        <dbReference type="ChEBI" id="CHEBI:57692"/>
    </ligand>
</feature>
<feature type="disulfide bond" description="Redox-active" evidence="1">
    <location>
        <begin position="48"/>
        <end position="53"/>
    </location>
</feature>
<comment type="function">
    <text evidence="1">Lipoamide dehydrogenase is a component of the alpha-ketoacid dehydrogenase complexes.</text>
</comment>
<comment type="catalytic activity">
    <reaction>
        <text>N(6)-[(R)-dihydrolipoyl]-L-lysyl-[protein] + NAD(+) = N(6)-[(R)-lipoyl]-L-lysyl-[protein] + NADH + H(+)</text>
        <dbReference type="Rhea" id="RHEA:15045"/>
        <dbReference type="Rhea" id="RHEA-COMP:10474"/>
        <dbReference type="Rhea" id="RHEA-COMP:10475"/>
        <dbReference type="ChEBI" id="CHEBI:15378"/>
        <dbReference type="ChEBI" id="CHEBI:57540"/>
        <dbReference type="ChEBI" id="CHEBI:57945"/>
        <dbReference type="ChEBI" id="CHEBI:83099"/>
        <dbReference type="ChEBI" id="CHEBI:83100"/>
        <dbReference type="EC" id="1.8.1.4"/>
    </reaction>
</comment>
<comment type="cofactor">
    <cofactor evidence="1">
        <name>FAD</name>
        <dbReference type="ChEBI" id="CHEBI:57692"/>
    </cofactor>
    <text evidence="1">Binds 1 FAD per subunit.</text>
</comment>
<comment type="subunit">
    <text evidence="1">Homodimer.</text>
</comment>
<comment type="subcellular location">
    <subcellularLocation>
        <location evidence="2">Cytoplasm</location>
    </subcellularLocation>
</comment>
<comment type="miscellaneous">
    <text>The active site is a redox-active disulfide bond.</text>
</comment>
<comment type="similarity">
    <text evidence="2">Belongs to the class-I pyridine nucleotide-disulfide oxidoreductase family.</text>
</comment>
<dbReference type="EC" id="1.8.1.4"/>
<dbReference type="EMBL" id="AE006470">
    <property type="protein sequence ID" value="AAM72528.1"/>
    <property type="molecule type" value="Genomic_DNA"/>
</dbReference>
<dbReference type="RefSeq" id="NP_662186.1">
    <property type="nucleotide sequence ID" value="NC_002932.3"/>
</dbReference>
<dbReference type="RefSeq" id="WP_010932967.1">
    <property type="nucleotide sequence ID" value="NC_002932.3"/>
</dbReference>
<dbReference type="SMR" id="Q8KCW2"/>
<dbReference type="STRING" id="194439.CT1298"/>
<dbReference type="EnsemblBacteria" id="AAM72528">
    <property type="protein sequence ID" value="AAM72528"/>
    <property type="gene ID" value="CT1298"/>
</dbReference>
<dbReference type="KEGG" id="cte:CT1298"/>
<dbReference type="eggNOG" id="COG1249">
    <property type="taxonomic scope" value="Bacteria"/>
</dbReference>
<dbReference type="HOGENOM" id="CLU_016755_0_3_10"/>
<dbReference type="OrthoDB" id="9800167at2"/>
<dbReference type="Proteomes" id="UP000001007">
    <property type="component" value="Chromosome"/>
</dbReference>
<dbReference type="GO" id="GO:0005737">
    <property type="term" value="C:cytoplasm"/>
    <property type="evidence" value="ECO:0007669"/>
    <property type="project" value="UniProtKB-SubCell"/>
</dbReference>
<dbReference type="GO" id="GO:0004148">
    <property type="term" value="F:dihydrolipoyl dehydrogenase (NADH) activity"/>
    <property type="evidence" value="ECO:0007669"/>
    <property type="project" value="UniProtKB-EC"/>
</dbReference>
<dbReference type="GO" id="GO:0050660">
    <property type="term" value="F:flavin adenine dinucleotide binding"/>
    <property type="evidence" value="ECO:0007669"/>
    <property type="project" value="InterPro"/>
</dbReference>
<dbReference type="GO" id="GO:0006103">
    <property type="term" value="P:2-oxoglutarate metabolic process"/>
    <property type="evidence" value="ECO:0007669"/>
    <property type="project" value="TreeGrafter"/>
</dbReference>
<dbReference type="FunFam" id="3.30.390.30:FF:000001">
    <property type="entry name" value="Dihydrolipoyl dehydrogenase"/>
    <property type="match status" value="1"/>
</dbReference>
<dbReference type="Gene3D" id="3.30.390.30">
    <property type="match status" value="1"/>
</dbReference>
<dbReference type="Gene3D" id="3.50.50.60">
    <property type="entry name" value="FAD/NAD(P)-binding domain"/>
    <property type="match status" value="2"/>
</dbReference>
<dbReference type="InterPro" id="IPR050151">
    <property type="entry name" value="Class-I_Pyr_Nuc-Dis_Oxidored"/>
</dbReference>
<dbReference type="InterPro" id="IPR036188">
    <property type="entry name" value="FAD/NAD-bd_sf"/>
</dbReference>
<dbReference type="InterPro" id="IPR023753">
    <property type="entry name" value="FAD/NAD-binding_dom"/>
</dbReference>
<dbReference type="InterPro" id="IPR016156">
    <property type="entry name" value="FAD/NAD-linked_Rdtase_dimer_sf"/>
</dbReference>
<dbReference type="InterPro" id="IPR006258">
    <property type="entry name" value="Lipoamide_DH"/>
</dbReference>
<dbReference type="InterPro" id="IPR001100">
    <property type="entry name" value="Pyr_nuc-diS_OxRdtase"/>
</dbReference>
<dbReference type="InterPro" id="IPR004099">
    <property type="entry name" value="Pyr_nucl-diS_OxRdtase_dimer"/>
</dbReference>
<dbReference type="InterPro" id="IPR012999">
    <property type="entry name" value="Pyr_OxRdtase_I_AS"/>
</dbReference>
<dbReference type="NCBIfam" id="TIGR01350">
    <property type="entry name" value="lipoamide_DH"/>
    <property type="match status" value="1"/>
</dbReference>
<dbReference type="PANTHER" id="PTHR22912:SF217">
    <property type="entry name" value="DIHYDROLIPOYL DEHYDROGENASE"/>
    <property type="match status" value="1"/>
</dbReference>
<dbReference type="PANTHER" id="PTHR22912">
    <property type="entry name" value="DISULFIDE OXIDOREDUCTASE"/>
    <property type="match status" value="1"/>
</dbReference>
<dbReference type="Pfam" id="PF07992">
    <property type="entry name" value="Pyr_redox_2"/>
    <property type="match status" value="1"/>
</dbReference>
<dbReference type="Pfam" id="PF02852">
    <property type="entry name" value="Pyr_redox_dim"/>
    <property type="match status" value="1"/>
</dbReference>
<dbReference type="PIRSF" id="PIRSF000350">
    <property type="entry name" value="Mercury_reductase_MerA"/>
    <property type="match status" value="1"/>
</dbReference>
<dbReference type="PRINTS" id="PR00368">
    <property type="entry name" value="FADPNR"/>
</dbReference>
<dbReference type="PRINTS" id="PR00411">
    <property type="entry name" value="PNDRDTASEI"/>
</dbReference>
<dbReference type="SUPFAM" id="SSF51905">
    <property type="entry name" value="FAD/NAD(P)-binding domain"/>
    <property type="match status" value="1"/>
</dbReference>
<dbReference type="SUPFAM" id="SSF55424">
    <property type="entry name" value="FAD/NAD-linked reductases, dimerisation (C-terminal) domain"/>
    <property type="match status" value="1"/>
</dbReference>
<dbReference type="PROSITE" id="PS00076">
    <property type="entry name" value="PYRIDINE_REDOX_1"/>
    <property type="match status" value="1"/>
</dbReference>
<sequence length="469" mass="48007">MQQADTLAAQFDVAVIGSGPGGYEAAIHAARYGLKTCIVEKAVLGGVCVNWGCIPTKALLRSAEVFDLAKNPETFGVNVGNVSFDLAQAVKRSRNVALKSSKGVAYLLKKAAVEVLAGEAVLTGGAGVMVTMPDGSVRMLGAKNIIVATGSTPRVIPGLEPDGKKIITSREALILKEVPKSMIVVGGGAIGVEMAWFYAKAGSKVTIVELMPRMLPAEEAEVSEALKRSFEKAGITVHCGAKLDNVAVSESGVSAELVVEGSAPQTLNASCLLVAVGVTGAIDGLGLDAVGVETERGFIRTDGQCRTSAPGIYAIGDVRGGMLLAHKASAEAAIAVEAIAGKSPEPLSEPLIPRCVYAQPSVASVGLTEEAAVNAGYQVAVGRSQFAASGKANAYGQLEGFVKLVFDAATGKMLGGHLIGHDAVELIGELGLACRYGVTAGGLVNTVHAHPTLSETVREAAFDALQSMG</sequence>
<evidence type="ECO:0000250" key="1"/>
<evidence type="ECO:0000305" key="2"/>
<keyword id="KW-0963">Cytoplasm</keyword>
<keyword id="KW-1015">Disulfide bond</keyword>
<keyword id="KW-0274">FAD</keyword>
<keyword id="KW-0285">Flavoprotein</keyword>
<keyword id="KW-0520">NAD</keyword>
<keyword id="KW-0560">Oxidoreductase</keyword>
<keyword id="KW-0676">Redox-active center</keyword>
<keyword id="KW-1185">Reference proteome</keyword>
<proteinExistence type="inferred from homology"/>